<comment type="subcellular location">
    <subcellularLocation>
        <location evidence="5">Membrane</location>
        <topology evidence="5">Multi-pass membrane protein</topology>
    </subcellularLocation>
</comment>
<comment type="similarity">
    <text evidence="5">Belongs to the SYG1 (TC 2.A.94) family.</text>
</comment>
<organism>
    <name type="scientific">Dictyostelium discoideum</name>
    <name type="common">Social amoeba</name>
    <dbReference type="NCBI Taxonomy" id="44689"/>
    <lineage>
        <taxon>Eukaryota</taxon>
        <taxon>Amoebozoa</taxon>
        <taxon>Evosea</taxon>
        <taxon>Eumycetozoa</taxon>
        <taxon>Dictyostelia</taxon>
        <taxon>Dictyosteliales</taxon>
        <taxon>Dictyosteliaceae</taxon>
        <taxon>Dictyostelium</taxon>
    </lineage>
</organism>
<accession>Q55B06</accession>
<accession>C7FZX7</accession>
<accession>Q55B07</accession>
<feature type="chain" id="PRO_0000330820" description="SPX and EXS domain-containing protein 1">
    <location>
        <begin position="1"/>
        <end position="923"/>
    </location>
</feature>
<feature type="transmembrane region" description="Helical" evidence="1">
    <location>
        <begin position="382"/>
        <end position="402"/>
    </location>
</feature>
<feature type="transmembrane region" description="Helical" evidence="1">
    <location>
        <begin position="416"/>
        <end position="436"/>
    </location>
</feature>
<feature type="transmembrane region" description="Helical" evidence="1">
    <location>
        <begin position="471"/>
        <end position="491"/>
    </location>
</feature>
<feature type="transmembrane region" description="Helical" evidence="1">
    <location>
        <begin position="499"/>
        <end position="519"/>
    </location>
</feature>
<feature type="transmembrane region" description="Helical" evidence="1">
    <location>
        <begin position="529"/>
        <end position="551"/>
    </location>
</feature>
<feature type="transmembrane region" description="Helical" evidence="1">
    <location>
        <begin position="591"/>
        <end position="611"/>
    </location>
</feature>
<feature type="transmembrane region" description="Helical" evidence="1">
    <location>
        <begin position="620"/>
        <end position="640"/>
    </location>
</feature>
<feature type="transmembrane region" description="Helical" evidence="1">
    <location>
        <begin position="655"/>
        <end position="675"/>
    </location>
</feature>
<feature type="transmembrane region" description="Helical" evidence="1">
    <location>
        <begin position="700"/>
        <end position="720"/>
    </location>
</feature>
<feature type="domain" description="SPX" evidence="3">
    <location>
        <begin position="1"/>
        <end position="326"/>
    </location>
</feature>
<feature type="domain" description="EXS" evidence="2">
    <location>
        <begin position="585"/>
        <end position="785"/>
    </location>
</feature>
<feature type="region of interest" description="Disordered" evidence="4">
    <location>
        <begin position="94"/>
        <end position="150"/>
    </location>
</feature>
<feature type="region of interest" description="Disordered" evidence="4">
    <location>
        <begin position="185"/>
        <end position="208"/>
    </location>
</feature>
<feature type="region of interest" description="Disordered" evidence="4">
    <location>
        <begin position="793"/>
        <end position="871"/>
    </location>
</feature>
<feature type="compositionally biased region" description="Low complexity" evidence="4">
    <location>
        <begin position="94"/>
        <end position="147"/>
    </location>
</feature>
<feature type="compositionally biased region" description="Low complexity" evidence="4">
    <location>
        <begin position="186"/>
        <end position="195"/>
    </location>
</feature>
<protein>
    <recommendedName>
        <fullName>SPX and EXS domain-containing protein 1</fullName>
    </recommendedName>
</protein>
<name>SPXS1_DICDI</name>
<proteinExistence type="inferred from homology"/>
<reference key="1">
    <citation type="journal article" date="2002" name="Nature">
        <title>Sequence and analysis of chromosome 2 of Dictyostelium discoideum.</title>
        <authorList>
            <person name="Gloeckner G."/>
            <person name="Eichinger L."/>
            <person name="Szafranski K."/>
            <person name="Pachebat J.A."/>
            <person name="Bankier A.T."/>
            <person name="Dear P.H."/>
            <person name="Lehmann R."/>
            <person name="Baumgart C."/>
            <person name="Parra G."/>
            <person name="Abril J.F."/>
            <person name="Guigo R."/>
            <person name="Kumpf K."/>
            <person name="Tunggal B."/>
            <person name="Cox E.C."/>
            <person name="Quail M.A."/>
            <person name="Platzer M."/>
            <person name="Rosenthal A."/>
            <person name="Noegel A.A."/>
        </authorList>
    </citation>
    <scope>NUCLEOTIDE SEQUENCE [LARGE SCALE GENOMIC DNA]</scope>
    <source>
        <strain>AX4</strain>
    </source>
</reference>
<reference key="2">
    <citation type="journal article" date="2005" name="Nature">
        <title>The genome of the social amoeba Dictyostelium discoideum.</title>
        <authorList>
            <person name="Eichinger L."/>
            <person name="Pachebat J.A."/>
            <person name="Gloeckner G."/>
            <person name="Rajandream M.A."/>
            <person name="Sucgang R."/>
            <person name="Berriman M."/>
            <person name="Song J."/>
            <person name="Olsen R."/>
            <person name="Szafranski K."/>
            <person name="Xu Q."/>
            <person name="Tunggal B."/>
            <person name="Kummerfeld S."/>
            <person name="Madera M."/>
            <person name="Konfortov B.A."/>
            <person name="Rivero F."/>
            <person name="Bankier A.T."/>
            <person name="Lehmann R."/>
            <person name="Hamlin N."/>
            <person name="Davies R."/>
            <person name="Gaudet P."/>
            <person name="Fey P."/>
            <person name="Pilcher K."/>
            <person name="Chen G."/>
            <person name="Saunders D."/>
            <person name="Sodergren E.J."/>
            <person name="Davis P."/>
            <person name="Kerhornou A."/>
            <person name="Nie X."/>
            <person name="Hall N."/>
            <person name="Anjard C."/>
            <person name="Hemphill L."/>
            <person name="Bason N."/>
            <person name="Farbrother P."/>
            <person name="Desany B."/>
            <person name="Just E."/>
            <person name="Morio T."/>
            <person name="Rost R."/>
            <person name="Churcher C.M."/>
            <person name="Cooper J."/>
            <person name="Haydock S."/>
            <person name="van Driessche N."/>
            <person name="Cronin A."/>
            <person name="Goodhead I."/>
            <person name="Muzny D.M."/>
            <person name="Mourier T."/>
            <person name="Pain A."/>
            <person name="Lu M."/>
            <person name="Harper D."/>
            <person name="Lindsay R."/>
            <person name="Hauser H."/>
            <person name="James K.D."/>
            <person name="Quiles M."/>
            <person name="Madan Babu M."/>
            <person name="Saito T."/>
            <person name="Buchrieser C."/>
            <person name="Wardroper A."/>
            <person name="Felder M."/>
            <person name="Thangavelu M."/>
            <person name="Johnson D."/>
            <person name="Knights A."/>
            <person name="Loulseged H."/>
            <person name="Mungall K.L."/>
            <person name="Oliver K."/>
            <person name="Price C."/>
            <person name="Quail M.A."/>
            <person name="Urushihara H."/>
            <person name="Hernandez J."/>
            <person name="Rabbinowitsch E."/>
            <person name="Steffen D."/>
            <person name="Sanders M."/>
            <person name="Ma J."/>
            <person name="Kohara Y."/>
            <person name="Sharp S."/>
            <person name="Simmonds M.N."/>
            <person name="Spiegler S."/>
            <person name="Tivey A."/>
            <person name="Sugano S."/>
            <person name="White B."/>
            <person name="Walker D."/>
            <person name="Woodward J.R."/>
            <person name="Winckler T."/>
            <person name="Tanaka Y."/>
            <person name="Shaulsky G."/>
            <person name="Schleicher M."/>
            <person name="Weinstock G.M."/>
            <person name="Rosenthal A."/>
            <person name="Cox E.C."/>
            <person name="Chisholm R.L."/>
            <person name="Gibbs R.A."/>
            <person name="Loomis W.F."/>
            <person name="Platzer M."/>
            <person name="Kay R.R."/>
            <person name="Williams J.G."/>
            <person name="Dear P.H."/>
            <person name="Noegel A.A."/>
            <person name="Barrell B.G."/>
            <person name="Kuspa A."/>
        </authorList>
    </citation>
    <scope>NUCLEOTIDE SEQUENCE [LARGE SCALE GENOMIC DNA]</scope>
    <source>
        <strain>AX4</strain>
    </source>
</reference>
<sequence>MKFGKKLRFECVSEWHNKYISYGKLKKYLRYLYRSDLKQIGEAEEAHLLINGFPSLSDSQEQFKQLSNSSSPIFNDGSCLENSLDSSIGSNIIQEQSQHQQQAQQQPPQQAQQQPPQQAQQQAQQQAPQAQQQAQQQAQQPEQQQQQDLKESFNDITGYSIDQYEDTSNLDEKTPLISILDQSRPTTTTTTTTTTMNTSAGSGIFKNKKPKQIPTISIPVFSQSERERLFLSKIDEELRKINEFFSNKEKDIILHYNKLTEHCSLILKDRNPSPKVLKNIQKAFGELYKGLTMLENYVNLNYQGFEKILKKYDRLAPMNSSIKLDQMERIKLEKFHSSKSWRNMKEDVELLYCKIFKLDKISIAKKKLAPFSESQSADYHMLKLGFAIGLSIGILAFVIILFTNKSLNQHPDWTRFVSTIPIFRAVGIPILAVWLWGVNVYIWDNARVNYILIFGLDPRTSIDHRRIWKTASFLTAIWLTMFLLFCGTVTGNFALGDVPAQVYPLVLVIFFLSVVFFPFRFFHRKSRTLLFITLGNVIITPFGSTKFRALFLGDLLTSMVKTIFDFEYTACYFFTGDWMINDSTRCNQVNSIALPILSGLPLLWRFMQCILRYRETNNKIHLGNSTKYAVGFSVVLFSALNGNYQAYEPWSASRILWCVCFVLSTLYMYCWDVVVDWGFMWLGKPRPLLRHQLMYKRHMWSYYYVLFSNLILRFAWTLTITRIPFELPINSELFNTITASIELVRRFTWSIFRVENEHICNSIQYHAFDFSEAPWKNEVPKVESPKSLLPLSSSYPYRQDNFNNNNNNNNNNNNNNNNNNNNNNNNNNNNNNNNNNNNNNNNNNNNTNNNINNINNINNNNNNSPSGSNSSINNSFHLGSSSYSYDNQYSIWKKSSKQYYSTSLIDSIKKKFFNNNNSNNNKK</sequence>
<gene>
    <name type="ORF">DDB_G0271664</name>
</gene>
<keyword id="KW-0472">Membrane</keyword>
<keyword id="KW-1185">Reference proteome</keyword>
<keyword id="KW-0812">Transmembrane</keyword>
<keyword id="KW-1133">Transmembrane helix</keyword>
<dbReference type="EMBL" id="AAFI02000006">
    <property type="protein sequence ID" value="EEU04142.1"/>
    <property type="molecule type" value="Genomic_DNA"/>
</dbReference>
<dbReference type="RefSeq" id="XP_002649192.1">
    <property type="nucleotide sequence ID" value="XM_002649146.1"/>
</dbReference>
<dbReference type="SMR" id="Q55B06"/>
<dbReference type="FunCoup" id="Q55B06">
    <property type="interactions" value="78"/>
</dbReference>
<dbReference type="STRING" id="44689.Q55B06"/>
<dbReference type="PaxDb" id="44689-DDB0266489"/>
<dbReference type="EnsemblProtists" id="EEU04142">
    <property type="protein sequence ID" value="EEU04142"/>
    <property type="gene ID" value="DDB_G0271664"/>
</dbReference>
<dbReference type="GeneID" id="8617997"/>
<dbReference type="KEGG" id="ddi:DDB_G0271664"/>
<dbReference type="dictyBase" id="DDB_G0271664"/>
<dbReference type="VEuPathDB" id="AmoebaDB:DDB_G0271664"/>
<dbReference type="eggNOG" id="KOG1162">
    <property type="taxonomic scope" value="Eukaryota"/>
</dbReference>
<dbReference type="HOGENOM" id="CLU_316293_0_0_1"/>
<dbReference type="InParanoid" id="Q55B06"/>
<dbReference type="OMA" id="GHAQKML"/>
<dbReference type="PhylomeDB" id="Q55B06"/>
<dbReference type="PRO" id="PR:Q55B06"/>
<dbReference type="Proteomes" id="UP000002195">
    <property type="component" value="Chromosome 2"/>
</dbReference>
<dbReference type="GO" id="GO:0016020">
    <property type="term" value="C:membrane"/>
    <property type="evidence" value="ECO:0007669"/>
    <property type="project" value="UniProtKB-SubCell"/>
</dbReference>
<dbReference type="GO" id="GO:0005802">
    <property type="term" value="C:trans-Golgi network"/>
    <property type="evidence" value="ECO:0000318"/>
    <property type="project" value="GO_Central"/>
</dbReference>
<dbReference type="CDD" id="cd14447">
    <property type="entry name" value="SPX"/>
    <property type="match status" value="1"/>
</dbReference>
<dbReference type="InterPro" id="IPR004342">
    <property type="entry name" value="EXS_C"/>
</dbReference>
<dbReference type="InterPro" id="IPR004331">
    <property type="entry name" value="SPX_dom"/>
</dbReference>
<dbReference type="PANTHER" id="PTHR10783:SF46">
    <property type="entry name" value="PROTEIN ERD1 HOMOLOG 2"/>
    <property type="match status" value="1"/>
</dbReference>
<dbReference type="PANTHER" id="PTHR10783">
    <property type="entry name" value="XENOTROPIC AND POLYTROPIC RETROVIRUS RECEPTOR 1-RELATED"/>
    <property type="match status" value="1"/>
</dbReference>
<dbReference type="Pfam" id="PF03124">
    <property type="entry name" value="EXS"/>
    <property type="match status" value="1"/>
</dbReference>
<dbReference type="Pfam" id="PF03105">
    <property type="entry name" value="SPX"/>
    <property type="match status" value="2"/>
</dbReference>
<dbReference type="PROSITE" id="PS51380">
    <property type="entry name" value="EXS"/>
    <property type="match status" value="1"/>
</dbReference>
<dbReference type="PROSITE" id="PS51382">
    <property type="entry name" value="SPX"/>
    <property type="match status" value="1"/>
</dbReference>
<evidence type="ECO:0000255" key="1"/>
<evidence type="ECO:0000255" key="2">
    <source>
        <dbReference type="PROSITE-ProRule" id="PRU00712"/>
    </source>
</evidence>
<evidence type="ECO:0000255" key="3">
    <source>
        <dbReference type="PROSITE-ProRule" id="PRU00714"/>
    </source>
</evidence>
<evidence type="ECO:0000256" key="4">
    <source>
        <dbReference type="SAM" id="MobiDB-lite"/>
    </source>
</evidence>
<evidence type="ECO:0000305" key="5"/>